<evidence type="ECO:0000255" key="1">
    <source>
        <dbReference type="HAMAP-Rule" id="MF_01320"/>
    </source>
</evidence>
<evidence type="ECO:0000256" key="2">
    <source>
        <dbReference type="SAM" id="MobiDB-lite"/>
    </source>
</evidence>
<evidence type="ECO:0000305" key="3"/>
<keyword id="KW-1185">Reference proteome</keyword>
<keyword id="KW-0687">Ribonucleoprotein</keyword>
<keyword id="KW-0689">Ribosomal protein</keyword>
<keyword id="KW-0694">RNA-binding</keyword>
<keyword id="KW-0699">rRNA-binding</keyword>
<dbReference type="EMBL" id="DQ489736">
    <property type="protein sequence ID" value="ACA83415.1"/>
    <property type="molecule type" value="Genomic_DNA"/>
</dbReference>
<dbReference type="RefSeq" id="WP_004899460.1">
    <property type="nucleotide sequence ID" value="NC_010471.1"/>
</dbReference>
<dbReference type="SMR" id="B1MW11"/>
<dbReference type="STRING" id="349519.LCK_01592"/>
<dbReference type="GeneID" id="61103244"/>
<dbReference type="KEGG" id="lci:LCK_01592"/>
<dbReference type="eggNOG" id="COG0090">
    <property type="taxonomic scope" value="Bacteria"/>
</dbReference>
<dbReference type="HOGENOM" id="CLU_036235_2_1_9"/>
<dbReference type="OrthoDB" id="9778722at2"/>
<dbReference type="Proteomes" id="UP000002166">
    <property type="component" value="Chromosome"/>
</dbReference>
<dbReference type="GO" id="GO:0015934">
    <property type="term" value="C:large ribosomal subunit"/>
    <property type="evidence" value="ECO:0007669"/>
    <property type="project" value="InterPro"/>
</dbReference>
<dbReference type="GO" id="GO:0019843">
    <property type="term" value="F:rRNA binding"/>
    <property type="evidence" value="ECO:0007669"/>
    <property type="project" value="UniProtKB-UniRule"/>
</dbReference>
<dbReference type="GO" id="GO:0003735">
    <property type="term" value="F:structural constituent of ribosome"/>
    <property type="evidence" value="ECO:0007669"/>
    <property type="project" value="InterPro"/>
</dbReference>
<dbReference type="GO" id="GO:0016740">
    <property type="term" value="F:transferase activity"/>
    <property type="evidence" value="ECO:0007669"/>
    <property type="project" value="InterPro"/>
</dbReference>
<dbReference type="GO" id="GO:0002181">
    <property type="term" value="P:cytoplasmic translation"/>
    <property type="evidence" value="ECO:0007669"/>
    <property type="project" value="TreeGrafter"/>
</dbReference>
<dbReference type="FunFam" id="2.30.30.30:FF:000001">
    <property type="entry name" value="50S ribosomal protein L2"/>
    <property type="match status" value="1"/>
</dbReference>
<dbReference type="FunFam" id="2.40.50.140:FF:000003">
    <property type="entry name" value="50S ribosomal protein L2"/>
    <property type="match status" value="1"/>
</dbReference>
<dbReference type="FunFam" id="4.10.950.10:FF:000001">
    <property type="entry name" value="50S ribosomal protein L2"/>
    <property type="match status" value="1"/>
</dbReference>
<dbReference type="Gene3D" id="2.30.30.30">
    <property type="match status" value="1"/>
</dbReference>
<dbReference type="Gene3D" id="2.40.50.140">
    <property type="entry name" value="Nucleic acid-binding proteins"/>
    <property type="match status" value="1"/>
</dbReference>
<dbReference type="Gene3D" id="4.10.950.10">
    <property type="entry name" value="Ribosomal protein L2, domain 3"/>
    <property type="match status" value="1"/>
</dbReference>
<dbReference type="HAMAP" id="MF_01320_B">
    <property type="entry name" value="Ribosomal_uL2_B"/>
    <property type="match status" value="1"/>
</dbReference>
<dbReference type="InterPro" id="IPR012340">
    <property type="entry name" value="NA-bd_OB-fold"/>
</dbReference>
<dbReference type="InterPro" id="IPR014722">
    <property type="entry name" value="Rib_uL2_dom2"/>
</dbReference>
<dbReference type="InterPro" id="IPR002171">
    <property type="entry name" value="Ribosomal_uL2"/>
</dbReference>
<dbReference type="InterPro" id="IPR005880">
    <property type="entry name" value="Ribosomal_uL2_bac/org-type"/>
</dbReference>
<dbReference type="InterPro" id="IPR022669">
    <property type="entry name" value="Ribosomal_uL2_C"/>
</dbReference>
<dbReference type="InterPro" id="IPR022671">
    <property type="entry name" value="Ribosomal_uL2_CS"/>
</dbReference>
<dbReference type="InterPro" id="IPR014726">
    <property type="entry name" value="Ribosomal_uL2_dom3"/>
</dbReference>
<dbReference type="InterPro" id="IPR022666">
    <property type="entry name" value="Ribosomal_uL2_RNA-bd_dom"/>
</dbReference>
<dbReference type="InterPro" id="IPR008991">
    <property type="entry name" value="Translation_prot_SH3-like_sf"/>
</dbReference>
<dbReference type="NCBIfam" id="TIGR01171">
    <property type="entry name" value="rplB_bact"/>
    <property type="match status" value="1"/>
</dbReference>
<dbReference type="PANTHER" id="PTHR13691:SF5">
    <property type="entry name" value="LARGE RIBOSOMAL SUBUNIT PROTEIN UL2M"/>
    <property type="match status" value="1"/>
</dbReference>
<dbReference type="PANTHER" id="PTHR13691">
    <property type="entry name" value="RIBOSOMAL PROTEIN L2"/>
    <property type="match status" value="1"/>
</dbReference>
<dbReference type="Pfam" id="PF00181">
    <property type="entry name" value="Ribosomal_L2"/>
    <property type="match status" value="1"/>
</dbReference>
<dbReference type="Pfam" id="PF03947">
    <property type="entry name" value="Ribosomal_L2_C"/>
    <property type="match status" value="1"/>
</dbReference>
<dbReference type="PIRSF" id="PIRSF002158">
    <property type="entry name" value="Ribosomal_L2"/>
    <property type="match status" value="1"/>
</dbReference>
<dbReference type="SMART" id="SM01383">
    <property type="entry name" value="Ribosomal_L2"/>
    <property type="match status" value="1"/>
</dbReference>
<dbReference type="SMART" id="SM01382">
    <property type="entry name" value="Ribosomal_L2_C"/>
    <property type="match status" value="1"/>
</dbReference>
<dbReference type="SUPFAM" id="SSF50249">
    <property type="entry name" value="Nucleic acid-binding proteins"/>
    <property type="match status" value="1"/>
</dbReference>
<dbReference type="SUPFAM" id="SSF50104">
    <property type="entry name" value="Translation proteins SH3-like domain"/>
    <property type="match status" value="1"/>
</dbReference>
<dbReference type="PROSITE" id="PS00467">
    <property type="entry name" value="RIBOSOMAL_L2"/>
    <property type="match status" value="1"/>
</dbReference>
<gene>
    <name evidence="1" type="primary">rplB</name>
    <name type="ordered locus">LCK_01592</name>
</gene>
<name>RL2_LEUCK</name>
<feature type="chain" id="PRO_1000141575" description="Large ribosomal subunit protein uL2">
    <location>
        <begin position="1"/>
        <end position="277"/>
    </location>
</feature>
<feature type="region of interest" description="Disordered" evidence="2">
    <location>
        <begin position="212"/>
        <end position="277"/>
    </location>
</feature>
<feature type="compositionally biased region" description="Basic residues" evidence="2">
    <location>
        <begin position="254"/>
        <end position="277"/>
    </location>
</feature>
<reference key="1">
    <citation type="journal article" date="2008" name="J. Bacteriol.">
        <title>Complete genome sequence of Leuconostoc citreum KM20.</title>
        <authorList>
            <person name="Kim J.F."/>
            <person name="Jeong H."/>
            <person name="Lee J.-S."/>
            <person name="Choi S.-H."/>
            <person name="Ha M."/>
            <person name="Hur C.-G."/>
            <person name="Kim J.-S."/>
            <person name="Lee S."/>
            <person name="Park H.-S."/>
            <person name="Park Y.-H."/>
            <person name="Oh T.K."/>
        </authorList>
    </citation>
    <scope>NUCLEOTIDE SEQUENCE [LARGE SCALE GENOMIC DNA]</scope>
    <source>
        <strain>KM20</strain>
    </source>
</reference>
<sequence length="277" mass="29979">MAIKKYKPTSNGRRNMTASDFAEITKSTPEKSLLAKKSKTGARNNSGRMTVRHHAGGHKQAYRLVDFKRIKDNTTATVKAIEYDPNRTANIALLVYEDGIKSYILAPKGLKVGDKVQSGPDADIKVGNALPLSNIPEGTLIHNIELKPGKGGQLARSAGTSAQILGKDGKYVIVRLTSGEVRLVLATNRATIGEVGNAEHSLINWGKAGRNRWRGKRPHVRGSVMNPNDHPHGGGEGKAPVGRPSPMSPWGKKTAGKKTRDKKKASTKFIVRGRKSK</sequence>
<proteinExistence type="inferred from homology"/>
<comment type="function">
    <text evidence="1">One of the primary rRNA binding proteins. Required for association of the 30S and 50S subunits to form the 70S ribosome, for tRNA binding and peptide bond formation. It has been suggested to have peptidyltransferase activity; this is somewhat controversial. Makes several contacts with the 16S rRNA in the 70S ribosome.</text>
</comment>
<comment type="subunit">
    <text evidence="1">Part of the 50S ribosomal subunit. Forms a bridge to the 30S subunit in the 70S ribosome.</text>
</comment>
<comment type="similarity">
    <text evidence="1">Belongs to the universal ribosomal protein uL2 family.</text>
</comment>
<protein>
    <recommendedName>
        <fullName evidence="1">Large ribosomal subunit protein uL2</fullName>
    </recommendedName>
    <alternativeName>
        <fullName evidence="3">50S ribosomal protein L2</fullName>
    </alternativeName>
</protein>
<organism>
    <name type="scientific">Leuconostoc citreum (strain KM20)</name>
    <dbReference type="NCBI Taxonomy" id="349519"/>
    <lineage>
        <taxon>Bacteria</taxon>
        <taxon>Bacillati</taxon>
        <taxon>Bacillota</taxon>
        <taxon>Bacilli</taxon>
        <taxon>Lactobacillales</taxon>
        <taxon>Lactobacillaceae</taxon>
        <taxon>Leuconostoc</taxon>
    </lineage>
</organism>
<accession>B1MW11</accession>